<dbReference type="EMBL" id="CP000247">
    <property type="protein sequence ID" value="ABG72094.1"/>
    <property type="molecule type" value="Genomic_DNA"/>
</dbReference>
<dbReference type="RefSeq" id="WP_000872908.1">
    <property type="nucleotide sequence ID" value="NC_008253.1"/>
</dbReference>
<dbReference type="SMR" id="Q0TAD5"/>
<dbReference type="GeneID" id="93777969"/>
<dbReference type="KEGG" id="ecp:ECP_4138"/>
<dbReference type="HOGENOM" id="CLU_072626_4_0_6"/>
<dbReference type="Proteomes" id="UP000009182">
    <property type="component" value="Chromosome"/>
</dbReference>
<dbReference type="GO" id="GO:0005829">
    <property type="term" value="C:cytosol"/>
    <property type="evidence" value="ECO:0007669"/>
    <property type="project" value="TreeGrafter"/>
</dbReference>
<dbReference type="GO" id="GO:0060698">
    <property type="term" value="F:endoribonuclease inhibitor activity"/>
    <property type="evidence" value="ECO:0007669"/>
    <property type="project" value="UniProtKB-UniRule"/>
</dbReference>
<dbReference type="GO" id="GO:0019899">
    <property type="term" value="F:enzyme binding"/>
    <property type="evidence" value="ECO:0007669"/>
    <property type="project" value="UniProtKB-UniRule"/>
</dbReference>
<dbReference type="GO" id="GO:1902369">
    <property type="term" value="P:negative regulation of RNA catabolic process"/>
    <property type="evidence" value="ECO:0007669"/>
    <property type="project" value="TreeGrafter"/>
</dbReference>
<dbReference type="CDD" id="cd16841">
    <property type="entry name" value="RraA_family"/>
    <property type="match status" value="1"/>
</dbReference>
<dbReference type="FunFam" id="3.50.30.40:FF:000001">
    <property type="entry name" value="Regulator of ribonuclease activity A"/>
    <property type="match status" value="1"/>
</dbReference>
<dbReference type="Gene3D" id="3.50.30.40">
    <property type="entry name" value="Ribonuclease E inhibitor RraA/RraA-like"/>
    <property type="match status" value="1"/>
</dbReference>
<dbReference type="HAMAP" id="MF_00471">
    <property type="entry name" value="RraA"/>
    <property type="match status" value="1"/>
</dbReference>
<dbReference type="InterPro" id="IPR010203">
    <property type="entry name" value="RraA"/>
</dbReference>
<dbReference type="InterPro" id="IPR005493">
    <property type="entry name" value="RraA/RraA-like"/>
</dbReference>
<dbReference type="InterPro" id="IPR036704">
    <property type="entry name" value="RraA/RraA-like_sf"/>
</dbReference>
<dbReference type="InterPro" id="IPR014339">
    <property type="entry name" value="RraA_gpbac"/>
</dbReference>
<dbReference type="NCBIfam" id="TIGR01935">
    <property type="entry name" value="NOT-MenG"/>
    <property type="match status" value="1"/>
</dbReference>
<dbReference type="NCBIfam" id="NF006875">
    <property type="entry name" value="PRK09372.1"/>
    <property type="match status" value="1"/>
</dbReference>
<dbReference type="NCBIfam" id="TIGR02998">
    <property type="entry name" value="RraA_entero"/>
    <property type="match status" value="1"/>
</dbReference>
<dbReference type="PANTHER" id="PTHR33254">
    <property type="entry name" value="4-HYDROXY-4-METHYL-2-OXOGLUTARATE ALDOLASE 3-RELATED"/>
    <property type="match status" value="1"/>
</dbReference>
<dbReference type="PANTHER" id="PTHR33254:SF29">
    <property type="entry name" value="REGULATOR OF RIBONUCLEASE ACTIVITY A"/>
    <property type="match status" value="1"/>
</dbReference>
<dbReference type="Pfam" id="PF03737">
    <property type="entry name" value="RraA-like"/>
    <property type="match status" value="1"/>
</dbReference>
<dbReference type="SUPFAM" id="SSF89562">
    <property type="entry name" value="RraA-like"/>
    <property type="match status" value="1"/>
</dbReference>
<name>RRAA_ECOL5</name>
<comment type="function">
    <text evidence="1">Globally modulates RNA abundance by binding to RNase E (Rne) and regulating its endonucleolytic activity. Can modulate Rne action in a substrate-dependent manner by altering the composition of the degradosome. Modulates RNA-binding and helicase activities of the degradosome.</text>
</comment>
<comment type="subunit">
    <text evidence="1">Homotrimer. Binds to both RNA-binding sites in the C-terminal region of Rne and to RhlB.</text>
</comment>
<comment type="subcellular location">
    <subcellularLocation>
        <location evidence="1">Cytoplasm</location>
    </subcellularLocation>
</comment>
<comment type="similarity">
    <text evidence="1">Belongs to the RraA family.</text>
</comment>
<proteinExistence type="inferred from homology"/>
<gene>
    <name evidence="1" type="primary">rraA</name>
    <name type="ordered locus">ECP_4138</name>
</gene>
<reference key="1">
    <citation type="journal article" date="2006" name="Mol. Microbiol.">
        <title>Role of pathogenicity island-associated integrases in the genome plasticity of uropathogenic Escherichia coli strain 536.</title>
        <authorList>
            <person name="Hochhut B."/>
            <person name="Wilde C."/>
            <person name="Balling G."/>
            <person name="Middendorf B."/>
            <person name="Dobrindt U."/>
            <person name="Brzuszkiewicz E."/>
            <person name="Gottschalk G."/>
            <person name="Carniel E."/>
            <person name="Hacker J."/>
        </authorList>
    </citation>
    <scope>NUCLEOTIDE SEQUENCE [LARGE SCALE GENOMIC DNA]</scope>
    <source>
        <strain>536 / UPEC</strain>
    </source>
</reference>
<protein>
    <recommendedName>
        <fullName evidence="1">Regulator of ribonuclease activity A</fullName>
    </recommendedName>
</protein>
<evidence type="ECO:0000255" key="1">
    <source>
        <dbReference type="HAMAP-Rule" id="MF_00471"/>
    </source>
</evidence>
<accession>Q0TAD5</accession>
<keyword id="KW-0963">Cytoplasm</keyword>
<organism>
    <name type="scientific">Escherichia coli O6:K15:H31 (strain 536 / UPEC)</name>
    <dbReference type="NCBI Taxonomy" id="362663"/>
    <lineage>
        <taxon>Bacteria</taxon>
        <taxon>Pseudomonadati</taxon>
        <taxon>Pseudomonadota</taxon>
        <taxon>Gammaproteobacteria</taxon>
        <taxon>Enterobacterales</taxon>
        <taxon>Enterobacteriaceae</taxon>
        <taxon>Escherichia</taxon>
    </lineage>
</organism>
<feature type="chain" id="PRO_1000013837" description="Regulator of ribonuclease activity A">
    <location>
        <begin position="1"/>
        <end position="161"/>
    </location>
</feature>
<sequence length="161" mass="17360">MKYDTSELCDIYQEDVNVVEPLFSNFGGRASFGGQIITVKCFEDNGLLYDLLEQNGRGRVLVVDGGGSVRRALVDAELARLAVQNEWEGLVIYGAVRQVDDLEELDIGIQAMAAIPVGAAGEGIGESDVRVNFGGVTFFSGDHLYADNTGIILSEDPLDIE</sequence>